<accession>B8EFD3</accession>
<proteinExistence type="inferred from homology"/>
<evidence type="ECO:0000255" key="1">
    <source>
        <dbReference type="HAMAP-Rule" id="MF_00652"/>
    </source>
</evidence>
<comment type="similarity">
    <text evidence="1">Belongs to the UPF0246 family.</text>
</comment>
<protein>
    <recommendedName>
        <fullName evidence="1">UPF0246 protein Sbal223_3241</fullName>
    </recommendedName>
</protein>
<feature type="chain" id="PRO_1000200425" description="UPF0246 protein Sbal223_3241">
    <location>
        <begin position="1"/>
        <end position="257"/>
    </location>
</feature>
<sequence length="257" mass="28863">MLILVSPAKTLDFEQPPLTQVYSQPDFLTHSQELIQVCRQLTPSDIATLMKVSDKIAGLNAARFGEWQPDFSLDNAKQAIFAFRGDVYTGFDADSLSEDEIAQTQSQLRILSGLYGLLRPLDLIMPYRLEMGTALSNPKGKNLYEFWGDTLTQAVNEALAESGSDIIVNLASNEYFKAIKPKKLQGQLISPVFKDCKNGQYKVISFFAKRARGMMARYIITNKVNTLAELKAFNLAGYYYSEEQSSPTNPTFLREEQ</sequence>
<organism>
    <name type="scientific">Shewanella baltica (strain OS223)</name>
    <dbReference type="NCBI Taxonomy" id="407976"/>
    <lineage>
        <taxon>Bacteria</taxon>
        <taxon>Pseudomonadati</taxon>
        <taxon>Pseudomonadota</taxon>
        <taxon>Gammaproteobacteria</taxon>
        <taxon>Alteromonadales</taxon>
        <taxon>Shewanellaceae</taxon>
        <taxon>Shewanella</taxon>
    </lineage>
</organism>
<reference key="1">
    <citation type="submission" date="2008-12" db="EMBL/GenBank/DDBJ databases">
        <title>Complete sequence of chromosome of Shewanella baltica OS223.</title>
        <authorList>
            <consortium name="US DOE Joint Genome Institute"/>
            <person name="Lucas S."/>
            <person name="Copeland A."/>
            <person name="Lapidus A."/>
            <person name="Glavina del Rio T."/>
            <person name="Dalin E."/>
            <person name="Tice H."/>
            <person name="Bruce D."/>
            <person name="Goodwin L."/>
            <person name="Pitluck S."/>
            <person name="Chertkov O."/>
            <person name="Meincke L."/>
            <person name="Brettin T."/>
            <person name="Detter J.C."/>
            <person name="Han C."/>
            <person name="Kuske C.R."/>
            <person name="Larimer F."/>
            <person name="Land M."/>
            <person name="Hauser L."/>
            <person name="Kyrpides N."/>
            <person name="Ovchinnikova G."/>
            <person name="Brettar I."/>
            <person name="Rodrigues J."/>
            <person name="Konstantinidis K."/>
            <person name="Tiedje J."/>
        </authorList>
    </citation>
    <scope>NUCLEOTIDE SEQUENCE [LARGE SCALE GENOMIC DNA]</scope>
    <source>
        <strain>OS223</strain>
    </source>
</reference>
<gene>
    <name type="ordered locus">Sbal223_3241</name>
</gene>
<name>Y3241_SHEB2</name>
<dbReference type="EMBL" id="CP001252">
    <property type="protein sequence ID" value="ACK47725.1"/>
    <property type="molecule type" value="Genomic_DNA"/>
</dbReference>
<dbReference type="SMR" id="B8EFD3"/>
<dbReference type="KEGG" id="sbp:Sbal223_3241"/>
<dbReference type="HOGENOM" id="CLU_061989_0_0_6"/>
<dbReference type="Proteomes" id="UP000002507">
    <property type="component" value="Chromosome"/>
</dbReference>
<dbReference type="GO" id="GO:0005829">
    <property type="term" value="C:cytosol"/>
    <property type="evidence" value="ECO:0007669"/>
    <property type="project" value="TreeGrafter"/>
</dbReference>
<dbReference type="GO" id="GO:0033194">
    <property type="term" value="P:response to hydroperoxide"/>
    <property type="evidence" value="ECO:0007669"/>
    <property type="project" value="TreeGrafter"/>
</dbReference>
<dbReference type="HAMAP" id="MF_00652">
    <property type="entry name" value="UPF0246"/>
    <property type="match status" value="1"/>
</dbReference>
<dbReference type="InterPro" id="IPR005583">
    <property type="entry name" value="YaaA"/>
</dbReference>
<dbReference type="NCBIfam" id="NF002541">
    <property type="entry name" value="PRK02101.1-1"/>
    <property type="match status" value="1"/>
</dbReference>
<dbReference type="NCBIfam" id="NF002542">
    <property type="entry name" value="PRK02101.1-3"/>
    <property type="match status" value="1"/>
</dbReference>
<dbReference type="PANTHER" id="PTHR30283:SF4">
    <property type="entry name" value="PEROXIDE STRESS RESISTANCE PROTEIN YAAA"/>
    <property type="match status" value="1"/>
</dbReference>
<dbReference type="PANTHER" id="PTHR30283">
    <property type="entry name" value="PEROXIDE STRESS RESPONSE PROTEIN YAAA"/>
    <property type="match status" value="1"/>
</dbReference>
<dbReference type="Pfam" id="PF03883">
    <property type="entry name" value="H2O2_YaaD"/>
    <property type="match status" value="1"/>
</dbReference>